<protein>
    <recommendedName>
        <fullName evidence="1">tRNA dimethylallyltransferase</fullName>
        <ecNumber evidence="1">2.5.1.75</ecNumber>
    </recommendedName>
    <alternativeName>
        <fullName evidence="1">Dimethylallyl diphosphate:tRNA dimethylallyltransferase</fullName>
        <shortName evidence="1">DMAPP:tRNA dimethylallyltransferase</shortName>
        <shortName evidence="1">DMATase</shortName>
    </alternativeName>
    <alternativeName>
        <fullName evidence="1">Isopentenyl-diphosphate:tRNA isopentenyltransferase</fullName>
        <shortName evidence="1">IPP transferase</shortName>
        <shortName evidence="1">IPPT</shortName>
        <shortName evidence="1">IPTase</shortName>
    </alternativeName>
</protein>
<feature type="chain" id="PRO_0000377354" description="tRNA dimethylallyltransferase">
    <location>
        <begin position="1"/>
        <end position="329"/>
    </location>
</feature>
<feature type="region of interest" description="Interaction with substrate tRNA" evidence="1">
    <location>
        <begin position="37"/>
        <end position="40"/>
    </location>
</feature>
<feature type="region of interest" description="Disordered" evidence="2">
    <location>
        <begin position="306"/>
        <end position="329"/>
    </location>
</feature>
<feature type="compositionally biased region" description="Gly residues" evidence="2">
    <location>
        <begin position="320"/>
        <end position="329"/>
    </location>
</feature>
<feature type="binding site" evidence="1">
    <location>
        <begin position="12"/>
        <end position="19"/>
    </location>
    <ligand>
        <name>ATP</name>
        <dbReference type="ChEBI" id="CHEBI:30616"/>
    </ligand>
</feature>
<feature type="binding site" evidence="1">
    <location>
        <begin position="14"/>
        <end position="19"/>
    </location>
    <ligand>
        <name>substrate</name>
    </ligand>
</feature>
<feature type="site" description="Interaction with substrate tRNA" evidence="1">
    <location>
        <position position="103"/>
    </location>
</feature>
<feature type="site" description="Interaction with substrate tRNA" evidence="1">
    <location>
        <position position="126"/>
    </location>
</feature>
<keyword id="KW-0067">ATP-binding</keyword>
<keyword id="KW-0460">Magnesium</keyword>
<keyword id="KW-0547">Nucleotide-binding</keyword>
<keyword id="KW-0614">Plasmid</keyword>
<keyword id="KW-1185">Reference proteome</keyword>
<keyword id="KW-0808">Transferase</keyword>
<keyword id="KW-0819">tRNA processing</keyword>
<name>MIAA_THERP</name>
<accession>B9L505</accession>
<organism>
    <name type="scientific">Thermomicrobium roseum (strain ATCC 27502 / DSM 5159 / P-2)</name>
    <dbReference type="NCBI Taxonomy" id="309801"/>
    <lineage>
        <taxon>Bacteria</taxon>
        <taxon>Pseudomonadati</taxon>
        <taxon>Thermomicrobiota</taxon>
        <taxon>Thermomicrobia</taxon>
        <taxon>Thermomicrobiales</taxon>
        <taxon>Thermomicrobiaceae</taxon>
        <taxon>Thermomicrobium</taxon>
    </lineage>
</organism>
<evidence type="ECO:0000255" key="1">
    <source>
        <dbReference type="HAMAP-Rule" id="MF_00185"/>
    </source>
</evidence>
<evidence type="ECO:0000256" key="2">
    <source>
        <dbReference type="SAM" id="MobiDB-lite"/>
    </source>
</evidence>
<comment type="function">
    <text evidence="1">Catalyzes the transfer of a dimethylallyl group onto the adenine at position 37 in tRNAs that read codons beginning with uridine, leading to the formation of N6-(dimethylallyl)adenosine (i(6)A).</text>
</comment>
<comment type="catalytic activity">
    <reaction evidence="1">
        <text>adenosine(37) in tRNA + dimethylallyl diphosphate = N(6)-dimethylallyladenosine(37) in tRNA + diphosphate</text>
        <dbReference type="Rhea" id="RHEA:26482"/>
        <dbReference type="Rhea" id="RHEA-COMP:10162"/>
        <dbReference type="Rhea" id="RHEA-COMP:10375"/>
        <dbReference type="ChEBI" id="CHEBI:33019"/>
        <dbReference type="ChEBI" id="CHEBI:57623"/>
        <dbReference type="ChEBI" id="CHEBI:74411"/>
        <dbReference type="ChEBI" id="CHEBI:74415"/>
        <dbReference type="EC" id="2.5.1.75"/>
    </reaction>
</comment>
<comment type="cofactor">
    <cofactor evidence="1">
        <name>Mg(2+)</name>
        <dbReference type="ChEBI" id="CHEBI:18420"/>
    </cofactor>
</comment>
<comment type="subunit">
    <text evidence="1">Monomer.</text>
</comment>
<comment type="similarity">
    <text evidence="1">Belongs to the IPP transferase family.</text>
</comment>
<proteinExistence type="inferred from homology"/>
<reference key="1">
    <citation type="journal article" date="2009" name="PLoS ONE">
        <title>Complete genome sequence of the aerobic CO-oxidizing thermophile Thermomicrobium roseum.</title>
        <authorList>
            <person name="Wu D."/>
            <person name="Raymond J."/>
            <person name="Wu M."/>
            <person name="Chatterji S."/>
            <person name="Ren Q."/>
            <person name="Graham J.E."/>
            <person name="Bryant D.A."/>
            <person name="Robb F."/>
            <person name="Colman A."/>
            <person name="Tallon L.J."/>
            <person name="Badger J.H."/>
            <person name="Madupu R."/>
            <person name="Ward N.L."/>
            <person name="Eisen J.A."/>
        </authorList>
    </citation>
    <scope>NUCLEOTIDE SEQUENCE [LARGE SCALE GENOMIC DNA]</scope>
    <source>
        <strain>ATCC 27502 / DSM 5159 / P-2</strain>
    </source>
</reference>
<geneLocation type="plasmid">
    <name>Tros</name>
</geneLocation>
<dbReference type="EC" id="2.5.1.75" evidence="1"/>
<dbReference type="EMBL" id="CP001276">
    <property type="protein sequence ID" value="ACM06614.1"/>
    <property type="molecule type" value="Genomic_DNA"/>
</dbReference>
<dbReference type="RefSeq" id="WP_012642601.1">
    <property type="nucleotide sequence ID" value="NC_011961.1"/>
</dbReference>
<dbReference type="SMR" id="B9L505"/>
<dbReference type="KEGG" id="tro:trd_A0869"/>
<dbReference type="eggNOG" id="COG0324">
    <property type="taxonomic scope" value="Bacteria"/>
</dbReference>
<dbReference type="HOGENOM" id="CLU_032616_0_1_0"/>
<dbReference type="OrthoDB" id="9776390at2"/>
<dbReference type="Proteomes" id="UP000000447">
    <property type="component" value="Plasmid Tros"/>
</dbReference>
<dbReference type="GO" id="GO:0005524">
    <property type="term" value="F:ATP binding"/>
    <property type="evidence" value="ECO:0007669"/>
    <property type="project" value="UniProtKB-UniRule"/>
</dbReference>
<dbReference type="GO" id="GO:0052381">
    <property type="term" value="F:tRNA dimethylallyltransferase activity"/>
    <property type="evidence" value="ECO:0007669"/>
    <property type="project" value="UniProtKB-UniRule"/>
</dbReference>
<dbReference type="GO" id="GO:0006400">
    <property type="term" value="P:tRNA modification"/>
    <property type="evidence" value="ECO:0007669"/>
    <property type="project" value="TreeGrafter"/>
</dbReference>
<dbReference type="FunFam" id="1.10.20.140:FF:000001">
    <property type="entry name" value="tRNA dimethylallyltransferase"/>
    <property type="match status" value="1"/>
</dbReference>
<dbReference type="Gene3D" id="1.10.20.140">
    <property type="match status" value="1"/>
</dbReference>
<dbReference type="Gene3D" id="3.40.50.300">
    <property type="entry name" value="P-loop containing nucleotide triphosphate hydrolases"/>
    <property type="match status" value="1"/>
</dbReference>
<dbReference type="HAMAP" id="MF_00185">
    <property type="entry name" value="IPP_trans"/>
    <property type="match status" value="1"/>
</dbReference>
<dbReference type="InterPro" id="IPR039657">
    <property type="entry name" value="Dimethylallyltransferase"/>
</dbReference>
<dbReference type="InterPro" id="IPR018022">
    <property type="entry name" value="IPT"/>
</dbReference>
<dbReference type="InterPro" id="IPR027417">
    <property type="entry name" value="P-loop_NTPase"/>
</dbReference>
<dbReference type="NCBIfam" id="TIGR00174">
    <property type="entry name" value="miaA"/>
    <property type="match status" value="1"/>
</dbReference>
<dbReference type="PANTHER" id="PTHR11088">
    <property type="entry name" value="TRNA DIMETHYLALLYLTRANSFERASE"/>
    <property type="match status" value="1"/>
</dbReference>
<dbReference type="PANTHER" id="PTHR11088:SF60">
    <property type="entry name" value="TRNA DIMETHYLALLYLTRANSFERASE"/>
    <property type="match status" value="1"/>
</dbReference>
<dbReference type="Pfam" id="PF01715">
    <property type="entry name" value="IPPT"/>
    <property type="match status" value="1"/>
</dbReference>
<dbReference type="SUPFAM" id="SSF52540">
    <property type="entry name" value="P-loop containing nucleoside triphosphate hydrolases"/>
    <property type="match status" value="2"/>
</dbReference>
<sequence>MNKRKPVVALVGPTSVGKTATAIELALTFGGEVVSADSRYLYRGMDIGTDKPTLEERRGVPHHLIDILDPRDDYSLALFQRDAQRAIEEIHARGRLPIVAGGTPLYLRALLEGWRIPPAPPNPELRAQLELRARREGPEALHRELQTVDPVAAARIPPENVRRVIRALEIFLTTGRRMTELEGREAPPWRVLWLGLTMPRDELYRRIDERVDRQVARGLVEEVQRLLEQGVPPDAPAMTALGYRQIVAFLTGQLSLEEAIQRIKYDTHRYARHQLTWLRRMKQVEWYDVTQPGWYEQLRERVERSLREESDEGDVAVHQSGGGKEAPRA</sequence>
<gene>
    <name evidence="1" type="primary">miaA</name>
    <name type="ordered locus">trd_A0869</name>
</gene>